<name>IDI1_HUMAN</name>
<proteinExistence type="evidence at protein level"/>
<organism>
    <name type="scientific">Homo sapiens</name>
    <name type="common">Human</name>
    <dbReference type="NCBI Taxonomy" id="9606"/>
    <lineage>
        <taxon>Eukaryota</taxon>
        <taxon>Metazoa</taxon>
        <taxon>Chordata</taxon>
        <taxon>Craniata</taxon>
        <taxon>Vertebrata</taxon>
        <taxon>Euteleostomi</taxon>
        <taxon>Mammalia</taxon>
        <taxon>Eutheria</taxon>
        <taxon>Euarchontoglires</taxon>
        <taxon>Primates</taxon>
        <taxon>Haplorrhini</taxon>
        <taxon>Catarrhini</taxon>
        <taxon>Hominidae</taxon>
        <taxon>Homo</taxon>
    </lineage>
</organism>
<accession>Q13907</accession>
<accession>B4E155</accession>
<accession>Q32Q13</accession>
<accession>Q53GQ6</accession>
<accession>Q86U81</accession>
<accession>Q8WUX8</accession>
<accession>Q96IZ4</accession>
<accession>Q9BQ74</accession>
<reference key="1">
    <citation type="journal article" date="1994" name="Genomics">
        <title>A human promyelocyte mRNA transiently induced by TPA is homologous to yeast IPP isomerase.</title>
        <authorList>
            <person name="Xuan J.W."/>
            <person name="Kowalski J."/>
            <person name="Chambers A.F."/>
            <person name="Denhardt D.T."/>
        </authorList>
    </citation>
    <scope>NUCLEOTIDE SEQUENCE [MRNA] (ISOFORM 1)</scope>
</reference>
<reference key="2">
    <citation type="submission" date="2000-08" db="EMBL/GenBank/DDBJ databases">
        <title>Two genes for isopentenyl diphosphate isomerase in human.</title>
        <authorList>
            <person name="Masuda K."/>
            <person name="Breitling R."/>
            <person name="Krisans S.K."/>
            <person name="Keller B."/>
            <person name="Moeller G."/>
            <person name="Adamski J."/>
        </authorList>
    </citation>
    <scope>NUCLEOTIDE SEQUENCE [GENOMIC DNA]</scope>
</reference>
<reference key="3">
    <citation type="submission" date="2000-05" db="EMBL/GenBank/DDBJ databases">
        <title>Characterisation of a human gene for isopentenyl diphosphate dimethylally diphosphate isomerase 1 (IDI1).</title>
        <authorList>
            <person name="Masuda K."/>
            <person name="Krisans S.K."/>
            <person name="Keller B."/>
            <person name="Moeller G."/>
            <person name="Adamski J."/>
        </authorList>
    </citation>
    <scope>NUCLEOTIDE SEQUENCE [GENOMIC DNA / MRNA] (ISOFORM 1)</scope>
</reference>
<reference key="4">
    <citation type="submission" date="2003-05" db="EMBL/GenBank/DDBJ databases">
        <title>Cloning of human full-length CDSs in BD Creator(TM) system donor vector.</title>
        <authorList>
            <person name="Kalnine N."/>
            <person name="Chen X."/>
            <person name="Rolfs A."/>
            <person name="Halleck A."/>
            <person name="Hines L."/>
            <person name="Eisenstein S."/>
            <person name="Koundinya M."/>
            <person name="Raphael J."/>
            <person name="Moreira D."/>
            <person name="Kelley T."/>
            <person name="LaBaer J."/>
            <person name="Lin Y."/>
            <person name="Phelan M."/>
            <person name="Farmer A."/>
        </authorList>
    </citation>
    <scope>NUCLEOTIDE SEQUENCE [LARGE SCALE MRNA] (ISOFORM 1)</scope>
</reference>
<reference key="5">
    <citation type="journal article" date="2004" name="Nat. Genet.">
        <title>Complete sequencing and characterization of 21,243 full-length human cDNAs.</title>
        <authorList>
            <person name="Ota T."/>
            <person name="Suzuki Y."/>
            <person name="Nishikawa T."/>
            <person name="Otsuki T."/>
            <person name="Sugiyama T."/>
            <person name="Irie R."/>
            <person name="Wakamatsu A."/>
            <person name="Hayashi K."/>
            <person name="Sato H."/>
            <person name="Nagai K."/>
            <person name="Kimura K."/>
            <person name="Makita H."/>
            <person name="Sekine M."/>
            <person name="Obayashi M."/>
            <person name="Nishi T."/>
            <person name="Shibahara T."/>
            <person name="Tanaka T."/>
            <person name="Ishii S."/>
            <person name="Yamamoto J."/>
            <person name="Saito K."/>
            <person name="Kawai Y."/>
            <person name="Isono Y."/>
            <person name="Nakamura Y."/>
            <person name="Nagahari K."/>
            <person name="Murakami K."/>
            <person name="Yasuda T."/>
            <person name="Iwayanagi T."/>
            <person name="Wagatsuma M."/>
            <person name="Shiratori A."/>
            <person name="Sudo H."/>
            <person name="Hosoiri T."/>
            <person name="Kaku Y."/>
            <person name="Kodaira H."/>
            <person name="Kondo H."/>
            <person name="Sugawara M."/>
            <person name="Takahashi M."/>
            <person name="Kanda K."/>
            <person name="Yokoi T."/>
            <person name="Furuya T."/>
            <person name="Kikkawa E."/>
            <person name="Omura Y."/>
            <person name="Abe K."/>
            <person name="Kamihara K."/>
            <person name="Katsuta N."/>
            <person name="Sato K."/>
            <person name="Tanikawa M."/>
            <person name="Yamazaki M."/>
            <person name="Ninomiya K."/>
            <person name="Ishibashi T."/>
            <person name="Yamashita H."/>
            <person name="Murakawa K."/>
            <person name="Fujimori K."/>
            <person name="Tanai H."/>
            <person name="Kimata M."/>
            <person name="Watanabe M."/>
            <person name="Hiraoka S."/>
            <person name="Chiba Y."/>
            <person name="Ishida S."/>
            <person name="Ono Y."/>
            <person name="Takiguchi S."/>
            <person name="Watanabe S."/>
            <person name="Yosida M."/>
            <person name="Hotuta T."/>
            <person name="Kusano J."/>
            <person name="Kanehori K."/>
            <person name="Takahashi-Fujii A."/>
            <person name="Hara H."/>
            <person name="Tanase T.-O."/>
            <person name="Nomura Y."/>
            <person name="Togiya S."/>
            <person name="Komai F."/>
            <person name="Hara R."/>
            <person name="Takeuchi K."/>
            <person name="Arita M."/>
            <person name="Imose N."/>
            <person name="Musashino K."/>
            <person name="Yuuki H."/>
            <person name="Oshima A."/>
            <person name="Sasaki N."/>
            <person name="Aotsuka S."/>
            <person name="Yoshikawa Y."/>
            <person name="Matsunawa H."/>
            <person name="Ichihara T."/>
            <person name="Shiohata N."/>
            <person name="Sano S."/>
            <person name="Moriya S."/>
            <person name="Momiyama H."/>
            <person name="Satoh N."/>
            <person name="Takami S."/>
            <person name="Terashima Y."/>
            <person name="Suzuki O."/>
            <person name="Nakagawa S."/>
            <person name="Senoh A."/>
            <person name="Mizoguchi H."/>
            <person name="Goto Y."/>
            <person name="Shimizu F."/>
            <person name="Wakebe H."/>
            <person name="Hishigaki H."/>
            <person name="Watanabe T."/>
            <person name="Sugiyama A."/>
            <person name="Takemoto M."/>
            <person name="Kawakami B."/>
            <person name="Yamazaki M."/>
            <person name="Watanabe K."/>
            <person name="Kumagai A."/>
            <person name="Itakura S."/>
            <person name="Fukuzumi Y."/>
            <person name="Fujimori Y."/>
            <person name="Komiyama M."/>
            <person name="Tashiro H."/>
            <person name="Tanigami A."/>
            <person name="Fujiwara T."/>
            <person name="Ono T."/>
            <person name="Yamada K."/>
            <person name="Fujii Y."/>
            <person name="Ozaki K."/>
            <person name="Hirao M."/>
            <person name="Ohmori Y."/>
            <person name="Kawabata A."/>
            <person name="Hikiji T."/>
            <person name="Kobatake N."/>
            <person name="Inagaki H."/>
            <person name="Ikema Y."/>
            <person name="Okamoto S."/>
            <person name="Okitani R."/>
            <person name="Kawakami T."/>
            <person name="Noguchi S."/>
            <person name="Itoh T."/>
            <person name="Shigeta K."/>
            <person name="Senba T."/>
            <person name="Matsumura K."/>
            <person name="Nakajima Y."/>
            <person name="Mizuno T."/>
            <person name="Morinaga M."/>
            <person name="Sasaki M."/>
            <person name="Togashi T."/>
            <person name="Oyama M."/>
            <person name="Hata H."/>
            <person name="Watanabe M."/>
            <person name="Komatsu T."/>
            <person name="Mizushima-Sugano J."/>
            <person name="Satoh T."/>
            <person name="Shirai Y."/>
            <person name="Takahashi Y."/>
            <person name="Nakagawa K."/>
            <person name="Okumura K."/>
            <person name="Nagase T."/>
            <person name="Nomura N."/>
            <person name="Kikuchi H."/>
            <person name="Masuho Y."/>
            <person name="Yamashita R."/>
            <person name="Nakai K."/>
            <person name="Yada T."/>
            <person name="Nakamura Y."/>
            <person name="Ohara O."/>
            <person name="Isogai T."/>
            <person name="Sugano S."/>
        </authorList>
    </citation>
    <scope>NUCLEOTIDE SEQUENCE [LARGE SCALE MRNA] (ISOFORM 2)</scope>
    <source>
        <tissue>Kidney</tissue>
    </source>
</reference>
<reference key="6">
    <citation type="journal article" date="2004" name="Nature">
        <title>The DNA sequence and comparative analysis of human chromosome 10.</title>
        <authorList>
            <person name="Deloukas P."/>
            <person name="Earthrowl M.E."/>
            <person name="Grafham D.V."/>
            <person name="Rubenfield M."/>
            <person name="French L."/>
            <person name="Steward C.A."/>
            <person name="Sims S.K."/>
            <person name="Jones M.C."/>
            <person name="Searle S."/>
            <person name="Scott C."/>
            <person name="Howe K."/>
            <person name="Hunt S.E."/>
            <person name="Andrews T.D."/>
            <person name="Gilbert J.G.R."/>
            <person name="Swarbreck D."/>
            <person name="Ashurst J.L."/>
            <person name="Taylor A."/>
            <person name="Battles J."/>
            <person name="Bird C.P."/>
            <person name="Ainscough R."/>
            <person name="Almeida J.P."/>
            <person name="Ashwell R.I.S."/>
            <person name="Ambrose K.D."/>
            <person name="Babbage A.K."/>
            <person name="Bagguley C.L."/>
            <person name="Bailey J."/>
            <person name="Banerjee R."/>
            <person name="Bates K."/>
            <person name="Beasley H."/>
            <person name="Bray-Allen S."/>
            <person name="Brown A.J."/>
            <person name="Brown J.Y."/>
            <person name="Burford D.C."/>
            <person name="Burrill W."/>
            <person name="Burton J."/>
            <person name="Cahill P."/>
            <person name="Camire D."/>
            <person name="Carter N.P."/>
            <person name="Chapman J.C."/>
            <person name="Clark S.Y."/>
            <person name="Clarke G."/>
            <person name="Clee C.M."/>
            <person name="Clegg S."/>
            <person name="Corby N."/>
            <person name="Coulson A."/>
            <person name="Dhami P."/>
            <person name="Dutta I."/>
            <person name="Dunn M."/>
            <person name="Faulkner L."/>
            <person name="Frankish A."/>
            <person name="Frankland J.A."/>
            <person name="Garner P."/>
            <person name="Garnett J."/>
            <person name="Gribble S."/>
            <person name="Griffiths C."/>
            <person name="Grocock R."/>
            <person name="Gustafson E."/>
            <person name="Hammond S."/>
            <person name="Harley J.L."/>
            <person name="Hart E."/>
            <person name="Heath P.D."/>
            <person name="Ho T.P."/>
            <person name="Hopkins B."/>
            <person name="Horne J."/>
            <person name="Howden P.J."/>
            <person name="Huckle E."/>
            <person name="Hynds C."/>
            <person name="Johnson C."/>
            <person name="Johnson D."/>
            <person name="Kana A."/>
            <person name="Kay M."/>
            <person name="Kimberley A.M."/>
            <person name="Kershaw J.K."/>
            <person name="Kokkinaki M."/>
            <person name="Laird G.K."/>
            <person name="Lawlor S."/>
            <person name="Lee H.M."/>
            <person name="Leongamornlert D.A."/>
            <person name="Laird G."/>
            <person name="Lloyd C."/>
            <person name="Lloyd D.M."/>
            <person name="Loveland J."/>
            <person name="Lovell J."/>
            <person name="McLaren S."/>
            <person name="McLay K.E."/>
            <person name="McMurray A."/>
            <person name="Mashreghi-Mohammadi M."/>
            <person name="Matthews L."/>
            <person name="Milne S."/>
            <person name="Nickerson T."/>
            <person name="Nguyen M."/>
            <person name="Overton-Larty E."/>
            <person name="Palmer S.A."/>
            <person name="Pearce A.V."/>
            <person name="Peck A.I."/>
            <person name="Pelan S."/>
            <person name="Phillimore B."/>
            <person name="Porter K."/>
            <person name="Rice C.M."/>
            <person name="Rogosin A."/>
            <person name="Ross M.T."/>
            <person name="Sarafidou T."/>
            <person name="Sehra H.K."/>
            <person name="Shownkeen R."/>
            <person name="Skuce C.D."/>
            <person name="Smith M."/>
            <person name="Standring L."/>
            <person name="Sycamore N."/>
            <person name="Tester J."/>
            <person name="Thorpe A."/>
            <person name="Torcasso W."/>
            <person name="Tracey A."/>
            <person name="Tromans A."/>
            <person name="Tsolas J."/>
            <person name="Wall M."/>
            <person name="Walsh J."/>
            <person name="Wang H."/>
            <person name="Weinstock K."/>
            <person name="West A.P."/>
            <person name="Willey D.L."/>
            <person name="Whitehead S.L."/>
            <person name="Wilming L."/>
            <person name="Wray P.W."/>
            <person name="Young L."/>
            <person name="Chen Y."/>
            <person name="Lovering R.C."/>
            <person name="Moschonas N.K."/>
            <person name="Siebert R."/>
            <person name="Fechtel K."/>
            <person name="Bentley D."/>
            <person name="Durbin R.M."/>
            <person name="Hubbard T."/>
            <person name="Doucette-Stamm L."/>
            <person name="Beck S."/>
            <person name="Smith D.R."/>
            <person name="Rogers J."/>
        </authorList>
    </citation>
    <scope>NUCLEOTIDE SEQUENCE [LARGE SCALE GENOMIC DNA]</scope>
</reference>
<reference key="7">
    <citation type="submission" date="2005-09" db="EMBL/GenBank/DDBJ databases">
        <authorList>
            <person name="Mural R.J."/>
            <person name="Istrail S."/>
            <person name="Sutton G.G."/>
            <person name="Florea L."/>
            <person name="Halpern A.L."/>
            <person name="Mobarry C.M."/>
            <person name="Lippert R."/>
            <person name="Walenz B."/>
            <person name="Shatkay H."/>
            <person name="Dew I."/>
            <person name="Miller J.R."/>
            <person name="Flanigan M.J."/>
            <person name="Edwards N.J."/>
            <person name="Bolanos R."/>
            <person name="Fasulo D."/>
            <person name="Halldorsson B.V."/>
            <person name="Hannenhalli S."/>
            <person name="Turner R."/>
            <person name="Yooseph S."/>
            <person name="Lu F."/>
            <person name="Nusskern D.R."/>
            <person name="Shue B.C."/>
            <person name="Zheng X.H."/>
            <person name="Zhong F."/>
            <person name="Delcher A.L."/>
            <person name="Huson D.H."/>
            <person name="Kravitz S.A."/>
            <person name="Mouchard L."/>
            <person name="Reinert K."/>
            <person name="Remington K.A."/>
            <person name="Clark A.G."/>
            <person name="Waterman M.S."/>
            <person name="Eichler E.E."/>
            <person name="Adams M.D."/>
            <person name="Hunkapiller M.W."/>
            <person name="Myers E.W."/>
            <person name="Venter J.C."/>
        </authorList>
    </citation>
    <scope>NUCLEOTIDE SEQUENCE [LARGE SCALE GENOMIC DNA]</scope>
</reference>
<reference key="8">
    <citation type="journal article" date="2004" name="Genome Res.">
        <title>The status, quality, and expansion of the NIH full-length cDNA project: the Mammalian Gene Collection (MGC).</title>
        <authorList>
            <consortium name="The MGC Project Team"/>
        </authorList>
    </citation>
    <scope>NUCLEOTIDE SEQUENCE [LARGE SCALE MRNA] (ISOFORM 1)</scope>
    <scope>PARTIAL NUCLEOTIDE SEQUENCE [LARGE SCALE MRNA] (ISOFORM 2)</scope>
    <source>
        <tissue>Bone marrow</tissue>
        <tissue>Skin</tissue>
        <tissue>Urinary bladder</tissue>
    </source>
</reference>
<reference key="9">
    <citation type="submission" date="2005-04" db="EMBL/GenBank/DDBJ databases">
        <authorList>
            <person name="Suzuki Y."/>
            <person name="Sugano S."/>
            <person name="Totoki Y."/>
            <person name="Toyoda A."/>
            <person name="Takeda T."/>
            <person name="Sakaki Y."/>
            <person name="Tanaka A."/>
            <person name="Yokoyama S."/>
        </authorList>
    </citation>
    <scope>NUCLEOTIDE SEQUENCE [LARGE SCALE MRNA] OF 40-227 (ISOFORM 2)</scope>
    <source>
        <tissue>Liver</tissue>
    </source>
</reference>
<reference key="10">
    <citation type="journal article" date="1996" name="Arch. Biochem. Biophys.">
        <title>Human isopentenyl diphosphate: dimethylallyl diphosphate isomerase: overproduction, purification, and characterization.</title>
        <authorList>
            <person name="Hahn F.M."/>
            <person name="Xuan J.W."/>
            <person name="Chambers A.F."/>
            <person name="Poulter C.D."/>
        </authorList>
    </citation>
    <scope>FUNCTION</scope>
    <scope>COFACTOR</scope>
    <scope>CATALYTIC ACTIVITY</scope>
    <scope>PATHWAY</scope>
</reference>
<reference key="11">
    <citation type="journal article" date="2009" name="Science">
        <title>Lysine acetylation targets protein complexes and co-regulates major cellular functions.</title>
        <authorList>
            <person name="Choudhary C."/>
            <person name="Kumar C."/>
            <person name="Gnad F."/>
            <person name="Nielsen M.L."/>
            <person name="Rehman M."/>
            <person name="Walther T.C."/>
            <person name="Olsen J.V."/>
            <person name="Mann M."/>
        </authorList>
    </citation>
    <scope>ACETYLATION [LARGE SCALE ANALYSIS] AT LYS-176</scope>
    <scope>IDENTIFICATION BY MASS SPECTROMETRY [LARGE SCALE ANALYSIS]</scope>
</reference>
<reference key="12">
    <citation type="journal article" date="2011" name="BMC Syst. Biol.">
        <title>Initial characterization of the human central proteome.</title>
        <authorList>
            <person name="Burkard T.R."/>
            <person name="Planyavsky M."/>
            <person name="Kaupe I."/>
            <person name="Breitwieser F.P."/>
            <person name="Buerckstuemmer T."/>
            <person name="Bennett K.L."/>
            <person name="Superti-Furga G."/>
            <person name="Colinge J."/>
        </authorList>
    </citation>
    <scope>IDENTIFICATION BY MASS SPECTROMETRY [LARGE SCALE ANALYSIS]</scope>
</reference>
<reference key="13">
    <citation type="journal article" date="2014" name="J. Proteomics">
        <title>An enzyme assisted RP-RPLC approach for in-depth analysis of human liver phosphoproteome.</title>
        <authorList>
            <person name="Bian Y."/>
            <person name="Song C."/>
            <person name="Cheng K."/>
            <person name="Dong M."/>
            <person name="Wang F."/>
            <person name="Huang J."/>
            <person name="Sun D."/>
            <person name="Wang L."/>
            <person name="Ye M."/>
            <person name="Zou H."/>
        </authorList>
    </citation>
    <scope>IDENTIFICATION BY MASS SPECTROMETRY [LARGE SCALE ANALYSIS]</scope>
    <source>
        <tissue>Liver</tissue>
    </source>
</reference>
<reference key="14">
    <citation type="journal article" date="2015" name="Proteomics">
        <title>N-terminome analysis of the human mitochondrial proteome.</title>
        <authorList>
            <person name="Vaca Jacome A.S."/>
            <person name="Rabilloud T."/>
            <person name="Schaeffer-Reiss C."/>
            <person name="Rompais M."/>
            <person name="Ayoub D."/>
            <person name="Lane L."/>
            <person name="Bairoch A."/>
            <person name="Van Dorsselaer A."/>
            <person name="Carapito C."/>
        </authorList>
    </citation>
    <scope>IDENTIFICATION BY MASS SPECTROMETRY [LARGE SCALE ANALYSIS]</scope>
</reference>
<reference key="15">
    <citation type="journal article" date="2007" name="J. Mol. Biol.">
        <title>The crystal structure of human isopentenyl diphosphate isomerase at 1.7 A resolution reveals its catalytic mechanism in isoprenoid biosynthesis.</title>
        <authorList>
            <person name="Zheng W."/>
            <person name="Sun F."/>
            <person name="Bartlam M."/>
            <person name="Li X."/>
            <person name="Li R."/>
            <person name="Rao Z."/>
        </authorList>
    </citation>
    <scope>X-RAY CRYSTALLOGRAPHY (1.7 ANGSTROMS) IN COMPLEX WITH SUBSTRATE AND METAL IONS</scope>
    <scope>SUBUNIT</scope>
</reference>
<comment type="function">
    <text evidence="4">Catalyzes the 1,3-allylic rearrangement of the homoallylic substrate isopentenyl (IPP) to its highly electrophilic allylic isomer, dimethylallyl diphosphate (DMAPP).</text>
</comment>
<comment type="catalytic activity">
    <reaction evidence="4">
        <text>isopentenyl diphosphate = dimethylallyl diphosphate</text>
        <dbReference type="Rhea" id="RHEA:23284"/>
        <dbReference type="ChEBI" id="CHEBI:57623"/>
        <dbReference type="ChEBI" id="CHEBI:128769"/>
        <dbReference type="EC" id="5.3.3.2"/>
    </reaction>
</comment>
<comment type="cofactor">
    <cofactor evidence="4">
        <name>Mg(2+)</name>
        <dbReference type="ChEBI" id="CHEBI:18420"/>
    </cofactor>
    <text evidence="4">Binds 1 Mg(2+) ion per subunit.</text>
</comment>
<comment type="pathway">
    <text evidence="4">Isoprenoid biosynthesis; dimethylallyl diphosphate biosynthesis; dimethylallyl diphosphate from isopentenyl diphosphate: step 1/1.</text>
</comment>
<comment type="subunit">
    <text evidence="3">Monomer.</text>
</comment>
<comment type="interaction">
    <interactant intactId="EBI-13341351">
        <id>Q13907-2</id>
    </interactant>
    <interactant intactId="EBI-625509">
        <id>Q8N720</id>
        <label>ZNF655</label>
    </interactant>
    <organismsDiffer>false</organismsDiffer>
    <experiments>3</experiments>
</comment>
<comment type="subcellular location">
    <subcellularLocation>
        <location evidence="1">Peroxisome</location>
    </subcellularLocation>
</comment>
<comment type="alternative products">
    <event type="alternative splicing"/>
    <isoform>
        <id>Q13907-1</id>
        <name>1</name>
        <sequence type="displayed"/>
    </isoform>
    <isoform>
        <id>Q13907-2</id>
        <name>2</name>
        <sequence type="described" ref="VSP_037889"/>
    </isoform>
</comment>
<comment type="similarity">
    <text evidence="7">Belongs to the IPP isomerase type 1 family.</text>
</comment>
<comment type="sequence caution" evidence="7">
    <conflict type="erroneous initiation">
        <sequence resource="EMBL-CDS" id="AAH57827"/>
    </conflict>
</comment>
<comment type="sequence caution" evidence="7">
    <conflict type="erroneous initiation">
        <sequence resource="EMBL-CDS" id="AAK29357"/>
    </conflict>
</comment>
<comment type="sequence caution" evidence="7">
    <conflict type="erroneous initiation">
        <sequence resource="EMBL-CDS" id="AAK49434"/>
    </conflict>
</comment>
<comment type="sequence caution" evidence="7">
    <conflict type="erroneous initiation">
        <sequence resource="EMBL-CDS" id="AAK49435"/>
    </conflict>
</comment>
<comment type="sequence caution" evidence="7">
    <conflict type="erroneous initiation">
        <sequence resource="EMBL-CDS" id="AAP35407"/>
    </conflict>
</comment>
<comment type="sequence caution" evidence="7">
    <conflict type="erroneous initiation">
        <sequence resource="EMBL-CDS" id="CAA34890"/>
    </conflict>
</comment>
<feature type="chain" id="PRO_0000205222" description="Isopentenyl-diphosphate Delta-isomerase 1">
    <location>
        <begin position="1"/>
        <end position="227"/>
    </location>
</feature>
<feature type="domain" description="Nudix hydrolase" evidence="2">
    <location>
        <begin position="49"/>
        <end position="199"/>
    </location>
</feature>
<feature type="short sequence motif" description="Microbody targeting signal">
    <location>
        <begin position="225"/>
        <end position="227"/>
    </location>
</feature>
<feature type="active site">
    <location>
        <position position="86"/>
    </location>
</feature>
<feature type="active site">
    <location>
        <position position="148"/>
    </location>
</feature>
<feature type="binding site" evidence="3">
    <location>
        <position position="36"/>
    </location>
    <ligand>
        <name>substrate</name>
    </ligand>
</feature>
<feature type="binding site">
    <location>
        <position position="40"/>
    </location>
    <ligand>
        <name>Mg(2+)</name>
        <dbReference type="ChEBI" id="CHEBI:18420"/>
    </ligand>
</feature>
<feature type="binding site">
    <location>
        <position position="51"/>
    </location>
    <ligand>
        <name>Mg(2+)</name>
        <dbReference type="ChEBI" id="CHEBI:18420"/>
    </ligand>
</feature>
<feature type="binding site" evidence="3">
    <location>
        <position position="70"/>
    </location>
    <ligand>
        <name>substrate</name>
    </ligand>
</feature>
<feature type="binding site" evidence="3">
    <location>
        <position position="74"/>
    </location>
    <ligand>
        <name>substrate</name>
    </ligand>
</feature>
<feature type="binding site" evidence="3">
    <location>
        <position position="87"/>
    </location>
    <ligand>
        <name>substrate</name>
    </ligand>
</feature>
<feature type="binding site">
    <location>
        <position position="146"/>
    </location>
    <ligand>
        <name>Mg(2+)</name>
        <dbReference type="ChEBI" id="CHEBI:18420"/>
    </ligand>
</feature>
<feature type="binding site">
    <location>
        <position position="148"/>
    </location>
    <ligand>
        <name>Mg(2+)</name>
        <dbReference type="ChEBI" id="CHEBI:18420"/>
    </ligand>
</feature>
<feature type="modified residue" description="N6-acetyllysine" evidence="8">
    <location>
        <position position="176"/>
    </location>
</feature>
<feature type="splice variant" id="VSP_037889" description="In isoform 2." evidence="5 6">
    <original>M</original>
    <variation>MWRGLALARAIGCAARGRGQWAVRAADCAQSGRHPGPAVVCGRRLISVLEQIRHFVMM</variation>
    <location>
        <position position="1"/>
    </location>
</feature>
<feature type="sequence conflict" description="In Ref. 9; BAD96595." evidence="7" ref="9">
    <original>I</original>
    <variation>V</variation>
    <location>
        <position position="45"/>
    </location>
</feature>
<feature type="sequence conflict" description="In Ref. 8; AAH19227." evidence="7" ref="8">
    <original>A</original>
    <variation>T</variation>
    <location>
        <position position="101"/>
    </location>
</feature>
<feature type="sequence conflict" description="In Ref. 9; BAD96595." evidence="7" ref="9">
    <original>R</original>
    <variation>G</variation>
    <location>
        <position position="156"/>
    </location>
</feature>
<feature type="sequence conflict" description="In Ref. 8; AAH06999." evidence="7" ref="8">
    <original>Y</original>
    <variation>H</variation>
    <location>
        <position position="173"/>
    </location>
</feature>
<feature type="helix" evidence="10">
    <location>
        <begin position="6"/>
        <end position="8"/>
    </location>
</feature>
<feature type="helix" evidence="11">
    <location>
        <begin position="11"/>
        <end position="16"/>
    </location>
</feature>
<feature type="strand" evidence="9">
    <location>
        <begin position="20"/>
        <end position="24"/>
    </location>
</feature>
<feature type="strand" evidence="9">
    <location>
        <begin position="30"/>
        <end position="35"/>
    </location>
</feature>
<feature type="helix" evidence="9">
    <location>
        <begin position="36"/>
        <end position="39"/>
    </location>
</feature>
<feature type="helix" evidence="9">
    <location>
        <begin position="42"/>
        <end position="45"/>
    </location>
</feature>
<feature type="turn" evidence="9">
    <location>
        <begin position="46"/>
        <end position="48"/>
    </location>
</feature>
<feature type="strand" evidence="9">
    <location>
        <begin position="51"/>
        <end position="59"/>
    </location>
</feature>
<feature type="strand" evidence="9">
    <location>
        <begin position="65"/>
        <end position="70"/>
    </location>
</feature>
<feature type="strand" evidence="9">
    <location>
        <begin position="75"/>
        <end position="77"/>
    </location>
</feature>
<feature type="strand" evidence="9">
    <location>
        <begin position="81"/>
        <end position="87"/>
    </location>
</feature>
<feature type="strand" evidence="9">
    <location>
        <begin position="90"/>
        <end position="92"/>
    </location>
</feature>
<feature type="helix" evidence="9">
    <location>
        <begin position="93"/>
        <end position="96"/>
    </location>
</feature>
<feature type="helix" evidence="9">
    <location>
        <begin position="99"/>
        <end position="101"/>
    </location>
</feature>
<feature type="helix" evidence="9">
    <location>
        <begin position="102"/>
        <end position="116"/>
    </location>
</feature>
<feature type="helix" evidence="9">
    <location>
        <begin position="120"/>
        <end position="122"/>
    </location>
</feature>
<feature type="helix" evidence="9">
    <location>
        <begin position="125"/>
        <end position="127"/>
    </location>
</feature>
<feature type="strand" evidence="9">
    <location>
        <begin position="128"/>
        <end position="139"/>
    </location>
</feature>
<feature type="strand" evidence="9">
    <location>
        <begin position="141"/>
        <end position="156"/>
    </location>
</feature>
<feature type="turn" evidence="9">
    <location>
        <begin position="165"/>
        <end position="167"/>
    </location>
</feature>
<feature type="strand" evidence="9">
    <location>
        <begin position="168"/>
        <end position="174"/>
    </location>
</feature>
<feature type="helix" evidence="9">
    <location>
        <begin position="176"/>
        <end position="187"/>
    </location>
</feature>
<feature type="helix" evidence="9">
    <location>
        <begin position="195"/>
        <end position="203"/>
    </location>
</feature>
<feature type="helix" evidence="9">
    <location>
        <begin position="205"/>
        <end position="209"/>
    </location>
</feature>
<feature type="turn" evidence="9">
    <location>
        <begin position="210"/>
        <end position="213"/>
    </location>
</feature>
<feature type="helix" evidence="9">
    <location>
        <begin position="216"/>
        <end position="218"/>
    </location>
</feature>
<feature type="strand" evidence="9">
    <location>
        <begin position="224"/>
        <end position="226"/>
    </location>
</feature>
<feature type="sequence conflict" description="In Ref. 8; AAI07894." evidence="7" ref="8">
    <original>V</original>
    <variation>G</variation>
    <location sequence="Q13907-2">
        <position position="39"/>
    </location>
</feature>
<protein>
    <recommendedName>
        <fullName>Isopentenyl-diphosphate Delta-isomerase 1</fullName>
        <ecNumber evidence="4">5.3.3.2</ecNumber>
    </recommendedName>
    <alternativeName>
        <fullName>Isopentenyl pyrophosphate isomerase 1</fullName>
        <shortName>IPP isomerase 1</shortName>
        <shortName>IPPI1</shortName>
    </alternativeName>
</protein>
<dbReference type="EC" id="5.3.3.2" evidence="4"/>
<dbReference type="EMBL" id="X17025">
    <property type="protein sequence ID" value="CAA34890.1"/>
    <property type="status" value="ALT_INIT"/>
    <property type="molecule type" value="mRNA"/>
</dbReference>
<dbReference type="EMBL" id="AF291755">
    <property type="protein sequence ID" value="AAK29357.1"/>
    <property type="status" value="ALT_INIT"/>
    <property type="molecule type" value="Genomic_DNA"/>
</dbReference>
<dbReference type="EMBL" id="AF271720">
    <property type="protein sequence ID" value="AAK49435.1"/>
    <property type="status" value="ALT_INIT"/>
    <property type="molecule type" value="mRNA"/>
</dbReference>
<dbReference type="EMBL" id="AF271724">
    <property type="protein sequence ID" value="AAK49434.1"/>
    <property type="status" value="ALT_INIT"/>
    <property type="molecule type" value="Genomic_DNA"/>
</dbReference>
<dbReference type="EMBL" id="AF271721">
    <property type="protein sequence ID" value="AAK49434.1"/>
    <property type="status" value="JOINED"/>
    <property type="molecule type" value="Genomic_DNA"/>
</dbReference>
<dbReference type="EMBL" id="AF271722">
    <property type="protein sequence ID" value="AAK49434.1"/>
    <property type="status" value="JOINED"/>
    <property type="molecule type" value="Genomic_DNA"/>
</dbReference>
<dbReference type="EMBL" id="AF271723">
    <property type="protein sequence ID" value="AAK49434.1"/>
    <property type="status" value="JOINED"/>
    <property type="molecule type" value="Genomic_DNA"/>
</dbReference>
<dbReference type="EMBL" id="BT006761">
    <property type="protein sequence ID" value="AAP35407.1"/>
    <property type="status" value="ALT_INIT"/>
    <property type="molecule type" value="mRNA"/>
</dbReference>
<dbReference type="EMBL" id="AK303669">
    <property type="protein sequence ID" value="BAG64667.1"/>
    <property type="molecule type" value="mRNA"/>
</dbReference>
<dbReference type="EMBL" id="AC022536">
    <property type="status" value="NOT_ANNOTATED_CDS"/>
    <property type="molecule type" value="Genomic_DNA"/>
</dbReference>
<dbReference type="EMBL" id="CH471072">
    <property type="protein sequence ID" value="EAW86521.1"/>
    <property type="molecule type" value="Genomic_DNA"/>
</dbReference>
<dbReference type="EMBL" id="BC005247">
    <property type="protein sequence ID" value="AAH05247.2"/>
    <property type="molecule type" value="mRNA"/>
</dbReference>
<dbReference type="EMBL" id="BC006999">
    <property type="protein sequence ID" value="AAH06999.2"/>
    <property type="molecule type" value="mRNA"/>
</dbReference>
<dbReference type="EMBL" id="BC019227">
    <property type="protein sequence ID" value="AAH19227.2"/>
    <property type="molecule type" value="mRNA"/>
</dbReference>
<dbReference type="EMBL" id="BC022418">
    <property type="protein sequence ID" value="AAH22418.2"/>
    <property type="molecule type" value="mRNA"/>
</dbReference>
<dbReference type="EMBL" id="BC025375">
    <property type="protein sequence ID" value="AAH25375.2"/>
    <property type="molecule type" value="mRNA"/>
</dbReference>
<dbReference type="EMBL" id="BC057827">
    <property type="protein sequence ID" value="AAH57827.1"/>
    <property type="status" value="ALT_INIT"/>
    <property type="molecule type" value="mRNA"/>
</dbReference>
<dbReference type="EMBL" id="BC107893">
    <property type="protein sequence ID" value="AAI07894.1"/>
    <property type="molecule type" value="mRNA"/>
</dbReference>
<dbReference type="EMBL" id="AK222875">
    <property type="protein sequence ID" value="BAD96595.1"/>
    <property type="molecule type" value="mRNA"/>
</dbReference>
<dbReference type="CCDS" id="CCDS7056.1">
    <molecule id="Q13907-2"/>
</dbReference>
<dbReference type="RefSeq" id="NP_001304884.1">
    <property type="nucleotide sequence ID" value="NM_001317955.1"/>
</dbReference>
<dbReference type="RefSeq" id="NP_001304885.1">
    <property type="nucleotide sequence ID" value="NM_001317956.1"/>
</dbReference>
<dbReference type="RefSeq" id="NP_001304886.1">
    <property type="nucleotide sequence ID" value="NM_001317957.1"/>
</dbReference>
<dbReference type="RefSeq" id="NP_004499.2">
    <molecule id="Q13907-2"/>
    <property type="nucleotide sequence ID" value="NM_004508.3"/>
</dbReference>
<dbReference type="RefSeq" id="XP_011517759.1">
    <property type="nucleotide sequence ID" value="XM_011519457.1"/>
</dbReference>
<dbReference type="PDB" id="2DHO">
    <property type="method" value="X-ray"/>
    <property type="resolution" value="1.60 A"/>
    <property type="chains" value="A=1-227"/>
</dbReference>
<dbReference type="PDB" id="2I6K">
    <property type="method" value="X-ray"/>
    <property type="resolution" value="2.00 A"/>
    <property type="chains" value="A/B=1-227"/>
</dbReference>
<dbReference type="PDB" id="2ICJ">
    <property type="method" value="X-ray"/>
    <property type="resolution" value="1.70 A"/>
    <property type="chains" value="A=1-227"/>
</dbReference>
<dbReference type="PDB" id="2ICK">
    <property type="method" value="X-ray"/>
    <property type="resolution" value="1.93 A"/>
    <property type="chains" value="A=1-227"/>
</dbReference>
<dbReference type="PDBsum" id="2DHO"/>
<dbReference type="PDBsum" id="2I6K"/>
<dbReference type="PDBsum" id="2ICJ"/>
<dbReference type="PDBsum" id="2ICK"/>
<dbReference type="SMR" id="Q13907"/>
<dbReference type="BioGRID" id="109648">
    <property type="interactions" value="37"/>
</dbReference>
<dbReference type="FunCoup" id="Q13907">
    <property type="interactions" value="2194"/>
</dbReference>
<dbReference type="IntAct" id="Q13907">
    <property type="interactions" value="12"/>
</dbReference>
<dbReference type="MINT" id="Q13907"/>
<dbReference type="STRING" id="9606.ENSP00000370748"/>
<dbReference type="DrugBank" id="DB01785">
    <property type="generic name" value="Dimethylallyl Diphosphate"/>
</dbReference>
<dbReference type="GuidetoPHARMACOLOGY" id="646"/>
<dbReference type="SwissLipids" id="SLP:000001219">
    <molecule id="Q13907-1"/>
</dbReference>
<dbReference type="GlyGen" id="Q13907">
    <property type="glycosylation" value="2 sites, 1 N-linked glycan (1 site), 1 O-linked glycan (1 site)"/>
</dbReference>
<dbReference type="iPTMnet" id="Q13907"/>
<dbReference type="PhosphoSitePlus" id="Q13907"/>
<dbReference type="SwissPalm" id="Q13907"/>
<dbReference type="BioMuta" id="IDI1"/>
<dbReference type="DMDM" id="6225527"/>
<dbReference type="jPOST" id="Q13907"/>
<dbReference type="MassIVE" id="Q13907"/>
<dbReference type="PaxDb" id="9606-ENSP00000370748"/>
<dbReference type="PeptideAtlas" id="Q13907"/>
<dbReference type="ProteomicsDB" id="59723">
    <molecule id="Q13907-1"/>
</dbReference>
<dbReference type="ProteomicsDB" id="59724">
    <molecule id="Q13907-2"/>
</dbReference>
<dbReference type="Pumba" id="Q13907"/>
<dbReference type="Antibodypedia" id="23803">
    <property type="antibodies" value="168 antibodies from 29 providers"/>
</dbReference>
<dbReference type="DNASU" id="3422"/>
<dbReference type="Ensembl" id="ENST00000381344.8">
    <molecule id="Q13907-2"/>
    <property type="protein sequence ID" value="ENSP00000370748.3"/>
    <property type="gene ID" value="ENSG00000067064.13"/>
</dbReference>
<dbReference type="Ensembl" id="ENST00000429642.2">
    <molecule id="Q13907-1"/>
    <property type="protein sequence ID" value="ENSP00000401879.2"/>
    <property type="gene ID" value="ENSG00000067064.13"/>
</dbReference>
<dbReference type="GeneID" id="3422"/>
<dbReference type="KEGG" id="hsa:3422"/>
<dbReference type="MANE-Select" id="ENST00000381344.8">
    <molecule id="Q13907-2"/>
    <property type="protein sequence ID" value="ENSP00000370748.3"/>
    <property type="RefSeq nucleotide sequence ID" value="NM_004508.4"/>
    <property type="RefSeq protein sequence ID" value="NP_004499.2"/>
</dbReference>
<dbReference type="UCSC" id="uc001iga.4">
    <molecule id="Q13907-1"/>
    <property type="organism name" value="human"/>
</dbReference>
<dbReference type="AGR" id="HGNC:5387"/>
<dbReference type="CTD" id="3422"/>
<dbReference type="DisGeNET" id="3422"/>
<dbReference type="GeneCards" id="IDI1"/>
<dbReference type="HGNC" id="HGNC:5387">
    <property type="gene designation" value="IDI1"/>
</dbReference>
<dbReference type="HPA" id="ENSG00000067064">
    <property type="expression patterns" value="Low tissue specificity"/>
</dbReference>
<dbReference type="MIM" id="604055">
    <property type="type" value="gene"/>
</dbReference>
<dbReference type="neXtProt" id="NX_Q13907"/>
<dbReference type="OpenTargets" id="ENSG00000067064"/>
<dbReference type="PharmGKB" id="PA29635"/>
<dbReference type="VEuPathDB" id="HostDB:ENSG00000067064"/>
<dbReference type="eggNOG" id="KOG0142">
    <property type="taxonomic scope" value="Eukaryota"/>
</dbReference>
<dbReference type="GeneTree" id="ENSGT00390000008527"/>
<dbReference type="HOGENOM" id="CLU_060552_0_2_1"/>
<dbReference type="InParanoid" id="Q13907"/>
<dbReference type="OrthoDB" id="510307at2759"/>
<dbReference type="PAN-GO" id="Q13907">
    <property type="GO annotations" value="3 GO annotations based on evolutionary models"/>
</dbReference>
<dbReference type="PhylomeDB" id="Q13907"/>
<dbReference type="TreeFam" id="TF300129"/>
<dbReference type="BioCyc" id="MetaCyc:HS00895-MONOMER"/>
<dbReference type="BRENDA" id="5.3.3.2">
    <property type="organism ID" value="2681"/>
</dbReference>
<dbReference type="PathwayCommons" id="Q13907"/>
<dbReference type="Reactome" id="R-HSA-191273">
    <property type="pathway name" value="Cholesterol biosynthesis"/>
</dbReference>
<dbReference type="Reactome" id="R-HSA-2426168">
    <property type="pathway name" value="Activation of gene expression by SREBF (SREBP)"/>
</dbReference>
<dbReference type="SABIO-RK" id="Q13907"/>
<dbReference type="SignaLink" id="Q13907"/>
<dbReference type="UniPathway" id="UPA00059">
    <property type="reaction ID" value="UER00104"/>
</dbReference>
<dbReference type="BioGRID-ORCS" id="3422">
    <property type="hits" value="198 hits in 1155 CRISPR screens"/>
</dbReference>
<dbReference type="ChiTaRS" id="IDI1">
    <property type="organism name" value="human"/>
</dbReference>
<dbReference type="EvolutionaryTrace" id="Q13907"/>
<dbReference type="GenomeRNAi" id="3422"/>
<dbReference type="Pharos" id="Q13907">
    <property type="development level" value="Tchem"/>
</dbReference>
<dbReference type="PRO" id="PR:Q13907"/>
<dbReference type="Proteomes" id="UP000005640">
    <property type="component" value="Chromosome 10"/>
</dbReference>
<dbReference type="RNAct" id="Q13907">
    <property type="molecule type" value="protein"/>
</dbReference>
<dbReference type="Bgee" id="ENSG00000067064">
    <property type="expression patterns" value="Expressed in adrenal tissue and 208 other cell types or tissues"/>
</dbReference>
<dbReference type="ExpressionAtlas" id="Q13907">
    <property type="expression patterns" value="baseline and differential"/>
</dbReference>
<dbReference type="GO" id="GO:0005737">
    <property type="term" value="C:cytoplasm"/>
    <property type="evidence" value="ECO:0000318"/>
    <property type="project" value="GO_Central"/>
</dbReference>
<dbReference type="GO" id="GO:0005829">
    <property type="term" value="C:cytosol"/>
    <property type="evidence" value="ECO:0000304"/>
    <property type="project" value="Reactome"/>
</dbReference>
<dbReference type="GO" id="GO:0005777">
    <property type="term" value="C:peroxisome"/>
    <property type="evidence" value="ECO:0000314"/>
    <property type="project" value="UniProtKB"/>
</dbReference>
<dbReference type="GO" id="GO:0004452">
    <property type="term" value="F:isopentenyl-diphosphate delta-isomerase activity"/>
    <property type="evidence" value="ECO:0000314"/>
    <property type="project" value="UniProtKB"/>
</dbReference>
<dbReference type="GO" id="GO:0000287">
    <property type="term" value="F:magnesium ion binding"/>
    <property type="evidence" value="ECO:0000314"/>
    <property type="project" value="UniProtKB"/>
</dbReference>
<dbReference type="GO" id="GO:0030145">
    <property type="term" value="F:manganese ion binding"/>
    <property type="evidence" value="ECO:0000314"/>
    <property type="project" value="UniProtKB"/>
</dbReference>
<dbReference type="GO" id="GO:0046872">
    <property type="term" value="F:metal ion binding"/>
    <property type="evidence" value="ECO:0007669"/>
    <property type="project" value="UniProtKB-KW"/>
</dbReference>
<dbReference type="GO" id="GO:0006695">
    <property type="term" value="P:cholesterol biosynthetic process"/>
    <property type="evidence" value="ECO:0007669"/>
    <property type="project" value="UniProtKB-KW"/>
</dbReference>
<dbReference type="GO" id="GO:0050992">
    <property type="term" value="P:dimethylallyl diphosphate biosynthetic process"/>
    <property type="evidence" value="ECO:0007669"/>
    <property type="project" value="UniProtKB-UniPathway"/>
</dbReference>
<dbReference type="GO" id="GO:0009240">
    <property type="term" value="P:isopentenyl diphosphate biosynthetic process"/>
    <property type="evidence" value="ECO:0000318"/>
    <property type="project" value="GO_Central"/>
</dbReference>
<dbReference type="GO" id="GO:0008299">
    <property type="term" value="P:isoprenoid biosynthetic process"/>
    <property type="evidence" value="ECO:0000314"/>
    <property type="project" value="UniProtKB"/>
</dbReference>
<dbReference type="GO" id="GO:0035634">
    <property type="term" value="P:response to stilbenoid"/>
    <property type="evidence" value="ECO:0007669"/>
    <property type="project" value="Ensembl"/>
</dbReference>
<dbReference type="CDD" id="cd02885">
    <property type="entry name" value="NUDIX_IPP_Isomerase"/>
    <property type="match status" value="1"/>
</dbReference>
<dbReference type="FunFam" id="3.90.79.10:FF:000012">
    <property type="entry name" value="Isopentenyl-diphosphate Delta-isomerase 1"/>
    <property type="match status" value="1"/>
</dbReference>
<dbReference type="Gene3D" id="3.90.79.10">
    <property type="entry name" value="Nucleoside Triphosphate Pyrophosphohydrolase"/>
    <property type="match status" value="1"/>
</dbReference>
<dbReference type="InterPro" id="IPR011876">
    <property type="entry name" value="IsopentenylPP_isomerase_typ1"/>
</dbReference>
<dbReference type="InterPro" id="IPR015797">
    <property type="entry name" value="NUDIX_hydrolase-like_dom_sf"/>
</dbReference>
<dbReference type="InterPro" id="IPR000086">
    <property type="entry name" value="NUDIX_hydrolase_dom"/>
</dbReference>
<dbReference type="NCBIfam" id="TIGR02150">
    <property type="entry name" value="IPP_isom_1"/>
    <property type="match status" value="1"/>
</dbReference>
<dbReference type="PANTHER" id="PTHR10885">
    <property type="entry name" value="ISOPENTENYL-DIPHOSPHATE DELTA-ISOMERASE"/>
    <property type="match status" value="1"/>
</dbReference>
<dbReference type="PANTHER" id="PTHR10885:SF5">
    <property type="entry name" value="ISOPENTENYL-DIPHOSPHATE DELTA-ISOMERASE 1"/>
    <property type="match status" value="1"/>
</dbReference>
<dbReference type="Pfam" id="PF00293">
    <property type="entry name" value="NUDIX"/>
    <property type="match status" value="1"/>
</dbReference>
<dbReference type="PIRSF" id="PIRSF018427">
    <property type="entry name" value="Isopntndiph_ism"/>
    <property type="match status" value="1"/>
</dbReference>
<dbReference type="SUPFAM" id="SSF55811">
    <property type="entry name" value="Nudix"/>
    <property type="match status" value="1"/>
</dbReference>
<dbReference type="PROSITE" id="PS51462">
    <property type="entry name" value="NUDIX"/>
    <property type="match status" value="1"/>
</dbReference>
<sequence>MPEINTNHLDKQQVQLLAEMCILIDENDNKIGAETKKNCHLNENIEKGLLHRAFSVFLFNTENKLLLQQRSDAKITFPGCFTNTCCSHPLSNPAELEESDALGVRRAAQRRLKAELGIPLEEVPPEEINYLTRIHYKAQSDGIWGEHEIDYILLVRKNVTLNPDPNEIKSYCYVSKEELKELLKKAASGEIKITPWFKIIAATFLFKWWDNLNHLNQFVDHEKIYRM</sequence>
<gene>
    <name type="primary">IDI1</name>
</gene>
<evidence type="ECO:0000250" key="1">
    <source>
        <dbReference type="UniProtKB" id="O35586"/>
    </source>
</evidence>
<evidence type="ECO:0000255" key="2">
    <source>
        <dbReference type="PROSITE-ProRule" id="PRU00794"/>
    </source>
</evidence>
<evidence type="ECO:0000269" key="3">
    <source>
    </source>
</evidence>
<evidence type="ECO:0000269" key="4">
    <source>
    </source>
</evidence>
<evidence type="ECO:0000303" key="5">
    <source>
    </source>
</evidence>
<evidence type="ECO:0000303" key="6">
    <source ref="9"/>
</evidence>
<evidence type="ECO:0000305" key="7"/>
<evidence type="ECO:0007744" key="8">
    <source>
    </source>
</evidence>
<evidence type="ECO:0007829" key="9">
    <source>
        <dbReference type="PDB" id="2DHO"/>
    </source>
</evidence>
<evidence type="ECO:0007829" key="10">
    <source>
        <dbReference type="PDB" id="2I6K"/>
    </source>
</evidence>
<evidence type="ECO:0007829" key="11">
    <source>
        <dbReference type="PDB" id="2ICJ"/>
    </source>
</evidence>
<keyword id="KW-0002">3D-structure</keyword>
<keyword id="KW-0007">Acetylation</keyword>
<keyword id="KW-0025">Alternative splicing</keyword>
<keyword id="KW-0152">Cholesterol biosynthesis</keyword>
<keyword id="KW-0153">Cholesterol metabolism</keyword>
<keyword id="KW-0413">Isomerase</keyword>
<keyword id="KW-0414">Isoprene biosynthesis</keyword>
<keyword id="KW-0444">Lipid biosynthesis</keyword>
<keyword id="KW-0443">Lipid metabolism</keyword>
<keyword id="KW-0460">Magnesium</keyword>
<keyword id="KW-0479">Metal-binding</keyword>
<keyword id="KW-0576">Peroxisome</keyword>
<keyword id="KW-1267">Proteomics identification</keyword>
<keyword id="KW-1185">Reference proteome</keyword>
<keyword id="KW-0752">Steroid biosynthesis</keyword>
<keyword id="KW-0753">Steroid metabolism</keyword>
<keyword id="KW-0756">Sterol biosynthesis</keyword>
<keyword id="KW-1207">Sterol metabolism</keyword>